<name>CHEB_TRIEI</name>
<organism>
    <name type="scientific">Trichodesmium erythraeum (strain IMS101)</name>
    <dbReference type="NCBI Taxonomy" id="203124"/>
    <lineage>
        <taxon>Bacteria</taxon>
        <taxon>Bacillati</taxon>
        <taxon>Cyanobacteriota</taxon>
        <taxon>Cyanophyceae</taxon>
        <taxon>Oscillatoriophycideae</taxon>
        <taxon>Oscillatoriales</taxon>
        <taxon>Microcoleaceae</taxon>
        <taxon>Trichodesmium</taxon>
    </lineage>
</organism>
<dbReference type="EC" id="3.1.1.61" evidence="1"/>
<dbReference type="EC" id="3.5.1.44" evidence="1"/>
<dbReference type="EMBL" id="CP000393">
    <property type="protein sequence ID" value="ABG53228.1"/>
    <property type="molecule type" value="Genomic_DNA"/>
</dbReference>
<dbReference type="RefSeq" id="WP_011613558.1">
    <property type="nucleotide sequence ID" value="NC_008312.1"/>
</dbReference>
<dbReference type="SMR" id="Q10WZ6"/>
<dbReference type="STRING" id="203124.Tery_4227"/>
<dbReference type="KEGG" id="ter:Tery_4227"/>
<dbReference type="eggNOG" id="COG2201">
    <property type="taxonomic scope" value="Bacteria"/>
</dbReference>
<dbReference type="HOGENOM" id="CLU_000445_51_0_3"/>
<dbReference type="OrthoDB" id="9793421at2"/>
<dbReference type="GO" id="GO:0005737">
    <property type="term" value="C:cytoplasm"/>
    <property type="evidence" value="ECO:0007669"/>
    <property type="project" value="UniProtKB-SubCell"/>
</dbReference>
<dbReference type="GO" id="GO:0000156">
    <property type="term" value="F:phosphorelay response regulator activity"/>
    <property type="evidence" value="ECO:0007669"/>
    <property type="project" value="InterPro"/>
</dbReference>
<dbReference type="GO" id="GO:0008984">
    <property type="term" value="F:protein-glutamate methylesterase activity"/>
    <property type="evidence" value="ECO:0007669"/>
    <property type="project" value="UniProtKB-UniRule"/>
</dbReference>
<dbReference type="GO" id="GO:0050568">
    <property type="term" value="F:protein-glutamine glutaminase activity"/>
    <property type="evidence" value="ECO:0007669"/>
    <property type="project" value="UniProtKB-UniRule"/>
</dbReference>
<dbReference type="GO" id="GO:0006935">
    <property type="term" value="P:chemotaxis"/>
    <property type="evidence" value="ECO:0007669"/>
    <property type="project" value="UniProtKB-UniRule"/>
</dbReference>
<dbReference type="CDD" id="cd16432">
    <property type="entry name" value="CheB_Rec"/>
    <property type="match status" value="1"/>
</dbReference>
<dbReference type="CDD" id="cd17541">
    <property type="entry name" value="REC_CheB-like"/>
    <property type="match status" value="1"/>
</dbReference>
<dbReference type="Gene3D" id="3.40.50.2300">
    <property type="match status" value="1"/>
</dbReference>
<dbReference type="Gene3D" id="3.40.50.180">
    <property type="entry name" value="Methylesterase CheB, C-terminal domain"/>
    <property type="match status" value="1"/>
</dbReference>
<dbReference type="HAMAP" id="MF_00099">
    <property type="entry name" value="CheB_chemtxs"/>
    <property type="match status" value="1"/>
</dbReference>
<dbReference type="InterPro" id="IPR008248">
    <property type="entry name" value="CheB-like"/>
</dbReference>
<dbReference type="InterPro" id="IPR035909">
    <property type="entry name" value="CheB_C"/>
</dbReference>
<dbReference type="InterPro" id="IPR011006">
    <property type="entry name" value="CheY-like_superfamily"/>
</dbReference>
<dbReference type="InterPro" id="IPR000673">
    <property type="entry name" value="Sig_transdc_resp-reg_Me-estase"/>
</dbReference>
<dbReference type="InterPro" id="IPR001789">
    <property type="entry name" value="Sig_transdc_resp-reg_receiver"/>
</dbReference>
<dbReference type="NCBIfam" id="NF001965">
    <property type="entry name" value="PRK00742.1"/>
    <property type="match status" value="1"/>
</dbReference>
<dbReference type="PANTHER" id="PTHR42872">
    <property type="entry name" value="PROTEIN-GLUTAMATE METHYLESTERASE/PROTEIN-GLUTAMINE GLUTAMINASE"/>
    <property type="match status" value="1"/>
</dbReference>
<dbReference type="PANTHER" id="PTHR42872:SF3">
    <property type="entry name" value="PROTEIN-GLUTAMATE METHYLESTERASE_PROTEIN-GLUTAMINE GLUTAMINASE 1"/>
    <property type="match status" value="1"/>
</dbReference>
<dbReference type="Pfam" id="PF01339">
    <property type="entry name" value="CheB_methylest"/>
    <property type="match status" value="1"/>
</dbReference>
<dbReference type="Pfam" id="PF00072">
    <property type="entry name" value="Response_reg"/>
    <property type="match status" value="1"/>
</dbReference>
<dbReference type="PIRSF" id="PIRSF000876">
    <property type="entry name" value="RR_chemtxs_CheB"/>
    <property type="match status" value="1"/>
</dbReference>
<dbReference type="SMART" id="SM00448">
    <property type="entry name" value="REC"/>
    <property type="match status" value="1"/>
</dbReference>
<dbReference type="SUPFAM" id="SSF52172">
    <property type="entry name" value="CheY-like"/>
    <property type="match status" value="1"/>
</dbReference>
<dbReference type="SUPFAM" id="SSF52738">
    <property type="entry name" value="Methylesterase CheB, C-terminal domain"/>
    <property type="match status" value="1"/>
</dbReference>
<dbReference type="PROSITE" id="PS50122">
    <property type="entry name" value="CHEB"/>
    <property type="match status" value="1"/>
</dbReference>
<dbReference type="PROSITE" id="PS50110">
    <property type="entry name" value="RESPONSE_REGULATORY"/>
    <property type="match status" value="1"/>
</dbReference>
<comment type="function">
    <text evidence="1">Involved in chemotaxis. Part of a chemotaxis signal transduction system that modulates chemotaxis in response to various stimuli. Catalyzes the demethylation of specific methylglutamate residues introduced into the chemoreceptors (methyl-accepting chemotaxis proteins or MCP) by CheR. Also mediates the irreversible deamidation of specific glutamine residues to glutamic acid.</text>
</comment>
<comment type="catalytic activity">
    <reaction evidence="1">
        <text>[protein]-L-glutamate 5-O-methyl ester + H2O = L-glutamyl-[protein] + methanol + H(+)</text>
        <dbReference type="Rhea" id="RHEA:23236"/>
        <dbReference type="Rhea" id="RHEA-COMP:10208"/>
        <dbReference type="Rhea" id="RHEA-COMP:10311"/>
        <dbReference type="ChEBI" id="CHEBI:15377"/>
        <dbReference type="ChEBI" id="CHEBI:15378"/>
        <dbReference type="ChEBI" id="CHEBI:17790"/>
        <dbReference type="ChEBI" id="CHEBI:29973"/>
        <dbReference type="ChEBI" id="CHEBI:82795"/>
        <dbReference type="EC" id="3.1.1.61"/>
    </reaction>
</comment>
<comment type="catalytic activity">
    <reaction evidence="1">
        <text>L-glutaminyl-[protein] + H2O = L-glutamyl-[protein] + NH4(+)</text>
        <dbReference type="Rhea" id="RHEA:16441"/>
        <dbReference type="Rhea" id="RHEA-COMP:10207"/>
        <dbReference type="Rhea" id="RHEA-COMP:10208"/>
        <dbReference type="ChEBI" id="CHEBI:15377"/>
        <dbReference type="ChEBI" id="CHEBI:28938"/>
        <dbReference type="ChEBI" id="CHEBI:29973"/>
        <dbReference type="ChEBI" id="CHEBI:30011"/>
        <dbReference type="EC" id="3.5.1.44"/>
    </reaction>
</comment>
<comment type="subcellular location">
    <subcellularLocation>
        <location evidence="1">Cytoplasm</location>
    </subcellularLocation>
</comment>
<comment type="domain">
    <text evidence="1">Contains a C-terminal catalytic domain, and an N-terminal region which modulates catalytic activity.</text>
</comment>
<comment type="PTM">
    <text evidence="1">Phosphorylated by CheA. Phosphorylation of the N-terminal regulatory domain activates the methylesterase activity.</text>
</comment>
<comment type="similarity">
    <text evidence="1">Belongs to the CheB family.</text>
</comment>
<sequence>MPKFRILIVDDSVIVRRIINNILSESDWIEVVGVAPSGQIALAKIPQVNPDLIILDVEMPEIDGLETLKRIRQTYKQLPVIMFSAITQRGAIATLDALTLGANDYITKPANMGSKEKAIEYIRKQLIPKIQVFCHRKVSLTKHCLAPSMTSFQRKTSTQLLTLKLEIVAIGVSTGGPQALYQLLHKFPASFRVPIVIVQHMPPVFTTRLAERLSSQCKIPVHEAKDRDVIKSGEAWIAPGNYHIILVREGKQVRIQTIQTPPENSCRPAVDVLFRSVAKLYQGAVLGVVLTGMGQDGLHGCTSIREMGGQVLVQDQASSVIWGMPGMVANAGLADQILPLNKLAEEIIRRIG</sequence>
<accession>Q10WZ6</accession>
<feature type="chain" id="PRO_0000264332" description="Protein-glutamate methylesterase/protein-glutamine glutaminase">
    <location>
        <begin position="1"/>
        <end position="352"/>
    </location>
</feature>
<feature type="domain" description="Response regulatory" evidence="1">
    <location>
        <begin position="5"/>
        <end position="123"/>
    </location>
</feature>
<feature type="domain" description="CheB-type methylesterase" evidence="1">
    <location>
        <begin position="166"/>
        <end position="352"/>
    </location>
</feature>
<feature type="active site" evidence="1">
    <location>
        <position position="173"/>
    </location>
</feature>
<feature type="active site" evidence="1">
    <location>
        <position position="200"/>
    </location>
</feature>
<feature type="active site" evidence="1">
    <location>
        <position position="296"/>
    </location>
</feature>
<feature type="modified residue" description="4-aspartylphosphate" evidence="1">
    <location>
        <position position="56"/>
    </location>
</feature>
<evidence type="ECO:0000255" key="1">
    <source>
        <dbReference type="HAMAP-Rule" id="MF_00099"/>
    </source>
</evidence>
<keyword id="KW-0145">Chemotaxis</keyword>
<keyword id="KW-0963">Cytoplasm</keyword>
<keyword id="KW-0378">Hydrolase</keyword>
<keyword id="KW-0597">Phosphoprotein</keyword>
<protein>
    <recommendedName>
        <fullName evidence="1">Protein-glutamate methylesterase/protein-glutamine glutaminase</fullName>
        <ecNumber evidence="1">3.1.1.61</ecNumber>
        <ecNumber evidence="1">3.5.1.44</ecNumber>
    </recommendedName>
</protein>
<gene>
    <name evidence="1" type="primary">cheB</name>
    <name type="ordered locus">Tery_4227</name>
</gene>
<proteinExistence type="inferred from homology"/>
<reference key="1">
    <citation type="journal article" date="2015" name="Proc. Natl. Acad. Sci. U.S.A.">
        <title>Trichodesmium genome maintains abundant, widespread noncoding DNA in situ, despite oligotrophic lifestyle.</title>
        <authorList>
            <person name="Walworth N."/>
            <person name="Pfreundt U."/>
            <person name="Nelson W.C."/>
            <person name="Mincer T."/>
            <person name="Heidelberg J.F."/>
            <person name="Fu F."/>
            <person name="Waterbury J.B."/>
            <person name="Glavina del Rio T."/>
            <person name="Goodwin L."/>
            <person name="Kyrpides N.C."/>
            <person name="Land M.L."/>
            <person name="Woyke T."/>
            <person name="Hutchins D.A."/>
            <person name="Hess W.R."/>
            <person name="Webb E.A."/>
        </authorList>
    </citation>
    <scope>NUCLEOTIDE SEQUENCE [LARGE SCALE GENOMIC DNA]</scope>
    <source>
        <strain>IMS101</strain>
    </source>
</reference>